<keyword id="KW-0413">Isomerase</keyword>
<reference key="1">
    <citation type="journal article" date="2003" name="Mol. Microbiol.">
        <title>Genome-based analysis of virulence genes in a non-biofilm-forming Staphylococcus epidermidis strain (ATCC 12228).</title>
        <authorList>
            <person name="Zhang Y.-Q."/>
            <person name="Ren S.-X."/>
            <person name="Li H.-L."/>
            <person name="Wang Y.-X."/>
            <person name="Fu G."/>
            <person name="Yang J."/>
            <person name="Qin Z.-Q."/>
            <person name="Miao Y.-G."/>
            <person name="Wang W.-Y."/>
            <person name="Chen R.-S."/>
            <person name="Shen Y."/>
            <person name="Chen Z."/>
            <person name="Yuan Z.-H."/>
            <person name="Zhao G.-P."/>
            <person name="Qu D."/>
            <person name="Danchin A."/>
            <person name="Wen Y.-M."/>
        </authorList>
    </citation>
    <scope>NUCLEOTIDE SEQUENCE [LARGE SCALE GENOMIC DNA]</scope>
    <source>
        <strain>ATCC 12228 / FDA PCI 1200</strain>
    </source>
</reference>
<sequence>MPIINVKLLEGRSDEQLKDLVTEVTHAVEKTTGANKEAIHVVIEEMRKDHYAVGGVRKSDQ</sequence>
<protein>
    <recommendedName>
        <fullName>Probable tautomerase SE_1045</fullName>
        <ecNumber>5.3.2.-</ecNumber>
    </recommendedName>
</protein>
<proteinExistence type="inferred from homology"/>
<comment type="similarity">
    <text evidence="2">Belongs to the 4-oxalocrotonate tautomerase family.</text>
</comment>
<comment type="sequence caution" evidence="2">
    <conflict type="erroneous initiation">
        <sequence resource="EMBL-CDS" id="AAO04642"/>
    </conflict>
</comment>
<feature type="initiator methionine" description="Removed" evidence="1">
    <location>
        <position position="1"/>
    </location>
</feature>
<feature type="chain" id="PRO_0000209546" description="Probable tautomerase SE_1045">
    <location>
        <begin position="2"/>
        <end position="61"/>
    </location>
</feature>
<feature type="active site" description="Proton acceptor; via imino nitrogen" evidence="1">
    <location>
        <position position="2"/>
    </location>
</feature>
<name>Y1045_STAES</name>
<dbReference type="EC" id="5.3.2.-"/>
<dbReference type="EMBL" id="AE015929">
    <property type="protein sequence ID" value="AAO04642.1"/>
    <property type="status" value="ALT_INIT"/>
    <property type="molecule type" value="Genomic_DNA"/>
</dbReference>
<dbReference type="RefSeq" id="NP_764600.1">
    <property type="nucleotide sequence ID" value="NC_004461.1"/>
</dbReference>
<dbReference type="RefSeq" id="WP_001831035.1">
    <property type="nucleotide sequence ID" value="NZ_WBME01000002.1"/>
</dbReference>
<dbReference type="SMR" id="Q8CPB7"/>
<dbReference type="KEGG" id="sep:SE_1045"/>
<dbReference type="PATRIC" id="fig|176280.10.peg.1021"/>
<dbReference type="eggNOG" id="COG1942">
    <property type="taxonomic scope" value="Bacteria"/>
</dbReference>
<dbReference type="HOGENOM" id="CLU_148073_5_1_9"/>
<dbReference type="OrthoDB" id="9804765at2"/>
<dbReference type="Proteomes" id="UP000001411">
    <property type="component" value="Chromosome"/>
</dbReference>
<dbReference type="GO" id="GO:0016853">
    <property type="term" value="F:isomerase activity"/>
    <property type="evidence" value="ECO:0007669"/>
    <property type="project" value="UniProtKB-KW"/>
</dbReference>
<dbReference type="CDD" id="cd00491">
    <property type="entry name" value="4Oxalocrotonate_Tautomerase"/>
    <property type="match status" value="1"/>
</dbReference>
<dbReference type="Gene3D" id="3.30.429.10">
    <property type="entry name" value="Macrophage Migration Inhibitory Factor"/>
    <property type="match status" value="1"/>
</dbReference>
<dbReference type="InterPro" id="IPR018191">
    <property type="entry name" value="4-OT"/>
</dbReference>
<dbReference type="InterPro" id="IPR004370">
    <property type="entry name" value="4-OT-like_dom"/>
</dbReference>
<dbReference type="InterPro" id="IPR014347">
    <property type="entry name" value="Tautomerase/MIF_sf"/>
</dbReference>
<dbReference type="NCBIfam" id="NF002571">
    <property type="entry name" value="PRK02220.1"/>
    <property type="match status" value="1"/>
</dbReference>
<dbReference type="NCBIfam" id="TIGR00013">
    <property type="entry name" value="taut"/>
    <property type="match status" value="1"/>
</dbReference>
<dbReference type="PANTHER" id="PTHR35530:SF1">
    <property type="entry name" value="2-HYDROXYMUCONATE TAUTOMERASE"/>
    <property type="match status" value="1"/>
</dbReference>
<dbReference type="PANTHER" id="PTHR35530">
    <property type="entry name" value="TAUTOMERASE-RELATED"/>
    <property type="match status" value="1"/>
</dbReference>
<dbReference type="Pfam" id="PF01361">
    <property type="entry name" value="Tautomerase"/>
    <property type="match status" value="1"/>
</dbReference>
<dbReference type="SUPFAM" id="SSF55331">
    <property type="entry name" value="Tautomerase/MIF"/>
    <property type="match status" value="1"/>
</dbReference>
<accession>Q8CPB7</accession>
<evidence type="ECO:0000250" key="1"/>
<evidence type="ECO:0000305" key="2"/>
<organism>
    <name type="scientific">Staphylococcus epidermidis (strain ATCC 12228 / FDA PCI 1200)</name>
    <dbReference type="NCBI Taxonomy" id="176280"/>
    <lineage>
        <taxon>Bacteria</taxon>
        <taxon>Bacillati</taxon>
        <taxon>Bacillota</taxon>
        <taxon>Bacilli</taxon>
        <taxon>Bacillales</taxon>
        <taxon>Staphylococcaceae</taxon>
        <taxon>Staphylococcus</taxon>
    </lineage>
</organism>
<gene>
    <name type="ordered locus">SE_1045</name>
</gene>